<name>LFTR_ECOL5</name>
<comment type="function">
    <text evidence="1">Functions in the N-end rule pathway of protein degradation where it conjugates Leu, Phe and, less efficiently, Met from aminoacyl-tRNAs to the N-termini of proteins containing an N-terminal arginine or lysine.</text>
</comment>
<comment type="catalytic activity">
    <reaction evidence="1">
        <text>N-terminal L-lysyl-[protein] + L-leucyl-tRNA(Leu) = N-terminal L-leucyl-L-lysyl-[protein] + tRNA(Leu) + H(+)</text>
        <dbReference type="Rhea" id="RHEA:12340"/>
        <dbReference type="Rhea" id="RHEA-COMP:9613"/>
        <dbReference type="Rhea" id="RHEA-COMP:9622"/>
        <dbReference type="Rhea" id="RHEA-COMP:12670"/>
        <dbReference type="Rhea" id="RHEA-COMP:12671"/>
        <dbReference type="ChEBI" id="CHEBI:15378"/>
        <dbReference type="ChEBI" id="CHEBI:65249"/>
        <dbReference type="ChEBI" id="CHEBI:78442"/>
        <dbReference type="ChEBI" id="CHEBI:78494"/>
        <dbReference type="ChEBI" id="CHEBI:133043"/>
        <dbReference type="EC" id="2.3.2.6"/>
    </reaction>
</comment>
<comment type="catalytic activity">
    <reaction evidence="1">
        <text>N-terminal L-arginyl-[protein] + L-leucyl-tRNA(Leu) = N-terminal L-leucyl-L-arginyl-[protein] + tRNA(Leu) + H(+)</text>
        <dbReference type="Rhea" id="RHEA:50416"/>
        <dbReference type="Rhea" id="RHEA-COMP:9613"/>
        <dbReference type="Rhea" id="RHEA-COMP:9622"/>
        <dbReference type="Rhea" id="RHEA-COMP:12672"/>
        <dbReference type="Rhea" id="RHEA-COMP:12673"/>
        <dbReference type="ChEBI" id="CHEBI:15378"/>
        <dbReference type="ChEBI" id="CHEBI:64719"/>
        <dbReference type="ChEBI" id="CHEBI:78442"/>
        <dbReference type="ChEBI" id="CHEBI:78494"/>
        <dbReference type="ChEBI" id="CHEBI:133044"/>
        <dbReference type="EC" id="2.3.2.6"/>
    </reaction>
</comment>
<comment type="catalytic activity">
    <reaction evidence="1">
        <text>L-phenylalanyl-tRNA(Phe) + an N-terminal L-alpha-aminoacyl-[protein] = an N-terminal L-phenylalanyl-L-alpha-aminoacyl-[protein] + tRNA(Phe)</text>
        <dbReference type="Rhea" id="RHEA:43632"/>
        <dbReference type="Rhea" id="RHEA-COMP:9668"/>
        <dbReference type="Rhea" id="RHEA-COMP:9699"/>
        <dbReference type="Rhea" id="RHEA-COMP:10636"/>
        <dbReference type="Rhea" id="RHEA-COMP:10637"/>
        <dbReference type="ChEBI" id="CHEBI:78442"/>
        <dbReference type="ChEBI" id="CHEBI:78531"/>
        <dbReference type="ChEBI" id="CHEBI:78597"/>
        <dbReference type="ChEBI" id="CHEBI:83561"/>
        <dbReference type="EC" id="2.3.2.6"/>
    </reaction>
</comment>
<comment type="subcellular location">
    <subcellularLocation>
        <location evidence="1">Cytoplasm</location>
    </subcellularLocation>
</comment>
<comment type="similarity">
    <text evidence="1">Belongs to the L/F-transferase family.</text>
</comment>
<dbReference type="EC" id="2.3.2.6" evidence="1"/>
<dbReference type="EMBL" id="CP000247">
    <property type="protein sequence ID" value="ABG68914.1"/>
    <property type="molecule type" value="Genomic_DNA"/>
</dbReference>
<dbReference type="RefSeq" id="WP_001241673.1">
    <property type="nucleotide sequence ID" value="NC_008253.1"/>
</dbReference>
<dbReference type="SMR" id="Q0TJG5"/>
<dbReference type="KEGG" id="ecp:ECP_0899"/>
<dbReference type="HOGENOM" id="CLU_075045_0_0_6"/>
<dbReference type="Proteomes" id="UP000009182">
    <property type="component" value="Chromosome"/>
</dbReference>
<dbReference type="GO" id="GO:0005737">
    <property type="term" value="C:cytoplasm"/>
    <property type="evidence" value="ECO:0007669"/>
    <property type="project" value="UniProtKB-SubCell"/>
</dbReference>
<dbReference type="GO" id="GO:0008914">
    <property type="term" value="F:leucyl-tRNA--protein transferase activity"/>
    <property type="evidence" value="ECO:0007669"/>
    <property type="project" value="UniProtKB-UniRule"/>
</dbReference>
<dbReference type="GO" id="GO:0030163">
    <property type="term" value="P:protein catabolic process"/>
    <property type="evidence" value="ECO:0007669"/>
    <property type="project" value="UniProtKB-UniRule"/>
</dbReference>
<dbReference type="FunFam" id="3.30.70.3550:FF:000001">
    <property type="entry name" value="Leucyl/phenylalanyl-tRNA--protein transferase"/>
    <property type="match status" value="1"/>
</dbReference>
<dbReference type="FunFam" id="3.40.630.70:FF:000001">
    <property type="entry name" value="Leucyl/phenylalanyl-tRNA--protein transferase"/>
    <property type="match status" value="1"/>
</dbReference>
<dbReference type="Gene3D" id="3.40.630.70">
    <property type="entry name" value="Leucyl/phenylalanyl-tRNA-protein transferase, C-terminal domain"/>
    <property type="match status" value="1"/>
</dbReference>
<dbReference type="Gene3D" id="3.30.70.3550">
    <property type="entry name" value="Leucyl/phenylalanyl-tRNA-protein transferase, N-terminal domain"/>
    <property type="match status" value="1"/>
</dbReference>
<dbReference type="HAMAP" id="MF_00688">
    <property type="entry name" value="Leu_Phe_trans"/>
    <property type="match status" value="1"/>
</dbReference>
<dbReference type="InterPro" id="IPR016181">
    <property type="entry name" value="Acyl_CoA_acyltransferase"/>
</dbReference>
<dbReference type="InterPro" id="IPR004616">
    <property type="entry name" value="Leu/Phe-tRNA_Trfase"/>
</dbReference>
<dbReference type="InterPro" id="IPR042203">
    <property type="entry name" value="Leu/Phe-tRNA_Trfase_C"/>
</dbReference>
<dbReference type="InterPro" id="IPR042221">
    <property type="entry name" value="Leu/Phe-tRNA_Trfase_N"/>
</dbReference>
<dbReference type="NCBIfam" id="TIGR00667">
    <property type="entry name" value="aat"/>
    <property type="match status" value="1"/>
</dbReference>
<dbReference type="PANTHER" id="PTHR30098">
    <property type="entry name" value="LEUCYL/PHENYLALANYL-TRNA--PROTEIN TRANSFERASE"/>
    <property type="match status" value="1"/>
</dbReference>
<dbReference type="PANTHER" id="PTHR30098:SF2">
    <property type="entry name" value="LEUCYL_PHENYLALANYL-TRNA--PROTEIN TRANSFERASE"/>
    <property type="match status" value="1"/>
</dbReference>
<dbReference type="Pfam" id="PF03588">
    <property type="entry name" value="Leu_Phe_trans"/>
    <property type="match status" value="1"/>
</dbReference>
<dbReference type="SUPFAM" id="SSF55729">
    <property type="entry name" value="Acyl-CoA N-acyltransferases (Nat)"/>
    <property type="match status" value="1"/>
</dbReference>
<protein>
    <recommendedName>
        <fullName evidence="1">Leucyl/phenylalanyl-tRNA--protein transferase</fullName>
        <ecNumber evidence="1">2.3.2.6</ecNumber>
    </recommendedName>
    <alternativeName>
        <fullName evidence="1">L/F-transferase</fullName>
    </alternativeName>
    <alternativeName>
        <fullName evidence="1">Leucyltransferase</fullName>
    </alternativeName>
    <alternativeName>
        <fullName evidence="1">Phenyalanyltransferase</fullName>
    </alternativeName>
</protein>
<organism>
    <name type="scientific">Escherichia coli O6:K15:H31 (strain 536 / UPEC)</name>
    <dbReference type="NCBI Taxonomy" id="362663"/>
    <lineage>
        <taxon>Bacteria</taxon>
        <taxon>Pseudomonadati</taxon>
        <taxon>Pseudomonadota</taxon>
        <taxon>Gammaproteobacteria</taxon>
        <taxon>Enterobacterales</taxon>
        <taxon>Enterobacteriaceae</taxon>
        <taxon>Escherichia</taxon>
    </lineage>
</organism>
<evidence type="ECO:0000255" key="1">
    <source>
        <dbReference type="HAMAP-Rule" id="MF_00688"/>
    </source>
</evidence>
<accession>Q0TJG5</accession>
<reference key="1">
    <citation type="journal article" date="2006" name="Mol. Microbiol.">
        <title>Role of pathogenicity island-associated integrases in the genome plasticity of uropathogenic Escherichia coli strain 536.</title>
        <authorList>
            <person name="Hochhut B."/>
            <person name="Wilde C."/>
            <person name="Balling G."/>
            <person name="Middendorf B."/>
            <person name="Dobrindt U."/>
            <person name="Brzuszkiewicz E."/>
            <person name="Gottschalk G."/>
            <person name="Carniel E."/>
            <person name="Hacker J."/>
        </authorList>
    </citation>
    <scope>NUCLEOTIDE SEQUENCE [LARGE SCALE GENOMIC DNA]</scope>
    <source>
        <strain>536 / UPEC</strain>
    </source>
</reference>
<gene>
    <name evidence="1" type="primary">aat</name>
    <name type="ordered locus">ECP_0899</name>
</gene>
<sequence>MRLVQLSRHSIAFPSPEGALREPNGLLALGGDLSPARLLMAYQRGIFPWFSPGDPILWWSPDPRAVLWPESLHISRSMKRFHKRSPYRVTMNYAFGQVIEGCASDREEGTWITRGVVEAYHRLHELGHAHSIEVWREDELVGGMYGVAQGTLFCGESMFSRMENASKTALLVFCDEFIRHGGKLIDCQVLNDHTASLGACEIPRRDYLNYLNQMRLGRLPNNFWVPRCLFSPQE</sequence>
<proteinExistence type="inferred from homology"/>
<feature type="chain" id="PRO_0000258059" description="Leucyl/phenylalanyl-tRNA--protein transferase">
    <location>
        <begin position="1"/>
        <end position="234"/>
    </location>
</feature>
<keyword id="KW-0012">Acyltransferase</keyword>
<keyword id="KW-0963">Cytoplasm</keyword>
<keyword id="KW-0808">Transferase</keyword>